<sequence length="327" mass="36759">MEAIKGSDVNVPDAVFAWLLDGRGGVKPLEDNDVIDSQHPCWLHLNYTHPDSARWLASTPLLPNNVRDALAGESSRPRVSRMGEGTLITLRCINGSTDERPDQLVAMRLYMDERFIVSTRQRKVLALDDVVSDLQEGTGPVDCGGWLVDVCDALTDHASEFIEELHDKIIDLEDNLLDQQIPPRGFLALLRKQLIVMRRYMAPQRDVYARLASERLPWMSDDHRRRMQDIADRLGRGLDEIDACIARTGIMADEIAQVMQESLARRTYTMSLMAMVFLPSTFLTGLFGVNLGGIPGGGWRFGFSLFCILLVVLIGGVTLWLHRSKWL</sequence>
<dbReference type="EMBL" id="CP000026">
    <property type="protein sequence ID" value="AAV77181.1"/>
    <property type="molecule type" value="Genomic_DNA"/>
</dbReference>
<dbReference type="RefSeq" id="WP_000387373.1">
    <property type="nucleotide sequence ID" value="NC_006511.1"/>
</dbReference>
<dbReference type="SMR" id="Q5PHR6"/>
<dbReference type="KEGG" id="spt:SPA1228"/>
<dbReference type="HOGENOM" id="CLU_007127_2_0_6"/>
<dbReference type="Proteomes" id="UP000008185">
    <property type="component" value="Chromosome"/>
</dbReference>
<dbReference type="GO" id="GO:0005886">
    <property type="term" value="C:plasma membrane"/>
    <property type="evidence" value="ECO:0007669"/>
    <property type="project" value="UniProtKB-SubCell"/>
</dbReference>
<dbReference type="GO" id="GO:0050897">
    <property type="term" value="F:cobalt ion binding"/>
    <property type="evidence" value="ECO:0007669"/>
    <property type="project" value="TreeGrafter"/>
</dbReference>
<dbReference type="GO" id="GO:0015087">
    <property type="term" value="F:cobalt ion transmembrane transporter activity"/>
    <property type="evidence" value="ECO:0007669"/>
    <property type="project" value="TreeGrafter"/>
</dbReference>
<dbReference type="GO" id="GO:0000287">
    <property type="term" value="F:magnesium ion binding"/>
    <property type="evidence" value="ECO:0007669"/>
    <property type="project" value="TreeGrafter"/>
</dbReference>
<dbReference type="GO" id="GO:0015095">
    <property type="term" value="F:magnesium ion transmembrane transporter activity"/>
    <property type="evidence" value="ECO:0007669"/>
    <property type="project" value="TreeGrafter"/>
</dbReference>
<dbReference type="GO" id="GO:0005385">
    <property type="term" value="F:zinc ion transmembrane transporter activity"/>
    <property type="evidence" value="ECO:0007669"/>
    <property type="project" value="UniProtKB-UniRule"/>
</dbReference>
<dbReference type="CDD" id="cd12833">
    <property type="entry name" value="ZntB-like_1"/>
    <property type="match status" value="1"/>
</dbReference>
<dbReference type="FunFam" id="1.20.58.340:FF:000002">
    <property type="entry name" value="Zinc transport protein ZntB"/>
    <property type="match status" value="1"/>
</dbReference>
<dbReference type="FunFam" id="3.30.460.20:FF:000001">
    <property type="entry name" value="Zinc transport protein ZntB"/>
    <property type="match status" value="1"/>
</dbReference>
<dbReference type="Gene3D" id="3.30.460.20">
    <property type="entry name" value="CorA soluble domain-like"/>
    <property type="match status" value="1"/>
</dbReference>
<dbReference type="Gene3D" id="1.20.58.340">
    <property type="entry name" value="Magnesium transport protein CorA, transmembrane region"/>
    <property type="match status" value="2"/>
</dbReference>
<dbReference type="HAMAP" id="MF_01565">
    <property type="entry name" value="ZntB"/>
    <property type="match status" value="1"/>
</dbReference>
<dbReference type="InterPro" id="IPR045861">
    <property type="entry name" value="CorA_cytoplasmic_dom"/>
</dbReference>
<dbReference type="InterPro" id="IPR045863">
    <property type="entry name" value="CorA_TM1_TM2"/>
</dbReference>
<dbReference type="InterPro" id="IPR002523">
    <property type="entry name" value="MgTranspt_CorA/ZnTranspt_ZntB"/>
</dbReference>
<dbReference type="InterPro" id="IPR023714">
    <property type="entry name" value="Zn_transp_ZntB"/>
</dbReference>
<dbReference type="NCBIfam" id="NF007092">
    <property type="entry name" value="PRK09546.1"/>
    <property type="match status" value="1"/>
</dbReference>
<dbReference type="PANTHER" id="PTHR46494">
    <property type="entry name" value="CORA FAMILY METAL ION TRANSPORTER (EUROFUNG)"/>
    <property type="match status" value="1"/>
</dbReference>
<dbReference type="PANTHER" id="PTHR46494:SF3">
    <property type="entry name" value="ZINC TRANSPORT PROTEIN ZNTB"/>
    <property type="match status" value="1"/>
</dbReference>
<dbReference type="Pfam" id="PF01544">
    <property type="entry name" value="CorA"/>
    <property type="match status" value="1"/>
</dbReference>
<dbReference type="SUPFAM" id="SSF143865">
    <property type="entry name" value="CorA soluble domain-like"/>
    <property type="match status" value="1"/>
</dbReference>
<dbReference type="SUPFAM" id="SSF144083">
    <property type="entry name" value="Magnesium transport protein CorA, transmembrane region"/>
    <property type="match status" value="1"/>
</dbReference>
<evidence type="ECO:0000255" key="1">
    <source>
        <dbReference type="HAMAP-Rule" id="MF_01565"/>
    </source>
</evidence>
<comment type="function">
    <text evidence="1">Zinc transporter. Acts as a Zn(2+):proton symporter, which likely mediates zinc ion uptake.</text>
</comment>
<comment type="catalytic activity">
    <reaction evidence="1">
        <text>Zn(2+)(out) + H(+)(out) = Zn(2+)(in) + H(+)(in)</text>
        <dbReference type="Rhea" id="RHEA:71195"/>
        <dbReference type="ChEBI" id="CHEBI:15378"/>
        <dbReference type="ChEBI" id="CHEBI:29105"/>
    </reaction>
    <physiologicalReaction direction="left-to-right" evidence="1">
        <dbReference type="Rhea" id="RHEA:71196"/>
    </physiologicalReaction>
</comment>
<comment type="subcellular location">
    <subcellularLocation>
        <location evidence="1">Cell inner membrane</location>
        <topology evidence="1">Multi-pass membrane protein</topology>
    </subcellularLocation>
</comment>
<comment type="similarity">
    <text evidence="1">Belongs to the CorA metal ion transporter (MIT) (TC 1.A.35) family.</text>
</comment>
<keyword id="KW-0997">Cell inner membrane</keyword>
<keyword id="KW-1003">Cell membrane</keyword>
<keyword id="KW-0406">Ion transport</keyword>
<keyword id="KW-0472">Membrane</keyword>
<keyword id="KW-0812">Transmembrane</keyword>
<keyword id="KW-1133">Transmembrane helix</keyword>
<keyword id="KW-0813">Transport</keyword>
<keyword id="KW-0862">Zinc</keyword>
<gene>
    <name evidence="1" type="primary">zntB</name>
    <name type="ordered locus">SPA1228</name>
</gene>
<proteinExistence type="inferred from homology"/>
<accession>Q5PHR6</accession>
<reference key="1">
    <citation type="journal article" date="2004" name="Nat. Genet.">
        <title>Comparison of genome degradation in Paratyphi A and Typhi, human-restricted serovars of Salmonella enterica that cause typhoid.</title>
        <authorList>
            <person name="McClelland M."/>
            <person name="Sanderson K.E."/>
            <person name="Clifton S.W."/>
            <person name="Latreille P."/>
            <person name="Porwollik S."/>
            <person name="Sabo A."/>
            <person name="Meyer R."/>
            <person name="Bieri T."/>
            <person name="Ozersky P."/>
            <person name="McLellan M."/>
            <person name="Harkins C.R."/>
            <person name="Wang C."/>
            <person name="Nguyen C."/>
            <person name="Berghoff A."/>
            <person name="Elliott G."/>
            <person name="Kohlberg S."/>
            <person name="Strong C."/>
            <person name="Du F."/>
            <person name="Carter J."/>
            <person name="Kremizki C."/>
            <person name="Layman D."/>
            <person name="Leonard S."/>
            <person name="Sun H."/>
            <person name="Fulton L."/>
            <person name="Nash W."/>
            <person name="Miner T."/>
            <person name="Minx P."/>
            <person name="Delehaunty K."/>
            <person name="Fronick C."/>
            <person name="Magrini V."/>
            <person name="Nhan M."/>
            <person name="Warren W."/>
            <person name="Florea L."/>
            <person name="Spieth J."/>
            <person name="Wilson R.K."/>
        </authorList>
    </citation>
    <scope>NUCLEOTIDE SEQUENCE [LARGE SCALE GENOMIC DNA]</scope>
    <source>
        <strain>ATCC 9150 / SARB42</strain>
    </source>
</reference>
<feature type="chain" id="PRO_0000239245" description="Zinc transport protein ZntB">
    <location>
        <begin position="1"/>
        <end position="327"/>
    </location>
</feature>
<feature type="topological domain" description="Cytoplasmic" evidence="1">
    <location>
        <begin position="1"/>
        <end position="273"/>
    </location>
</feature>
<feature type="transmembrane region" description="Helical" evidence="1">
    <location>
        <begin position="274"/>
        <end position="294"/>
    </location>
</feature>
<feature type="topological domain" description="Periplasmic" evidence="1">
    <location>
        <begin position="295"/>
        <end position="300"/>
    </location>
</feature>
<feature type="transmembrane region" description="Helical" evidence="1">
    <location>
        <begin position="301"/>
        <end position="321"/>
    </location>
</feature>
<feature type="topological domain" description="Cytoplasmic" evidence="1">
    <location>
        <begin position="322"/>
        <end position="327"/>
    </location>
</feature>
<organism>
    <name type="scientific">Salmonella paratyphi A (strain ATCC 9150 / SARB42)</name>
    <dbReference type="NCBI Taxonomy" id="295319"/>
    <lineage>
        <taxon>Bacteria</taxon>
        <taxon>Pseudomonadati</taxon>
        <taxon>Pseudomonadota</taxon>
        <taxon>Gammaproteobacteria</taxon>
        <taxon>Enterobacterales</taxon>
        <taxon>Enterobacteriaceae</taxon>
        <taxon>Salmonella</taxon>
    </lineage>
</organism>
<protein>
    <recommendedName>
        <fullName evidence="1">Zinc transport protein ZntB</fullName>
    </recommendedName>
</protein>
<name>ZNTB_SALPA</name>